<evidence type="ECO:0000250" key="1">
    <source>
        <dbReference type="UniProtKB" id="Q5TEU4"/>
    </source>
</evidence>
<evidence type="ECO:0000255" key="2"/>
<evidence type="ECO:0000256" key="3">
    <source>
        <dbReference type="SAM" id="MobiDB-lite"/>
    </source>
</evidence>
<evidence type="ECO:0000305" key="4"/>
<evidence type="ECO:0000312" key="5">
    <source>
        <dbReference type="RGD" id="1309829"/>
    </source>
</evidence>
<feature type="transit peptide" description="Mitochondrion" evidence="2">
    <location>
        <begin position="1"/>
        <end position="29"/>
    </location>
</feature>
<feature type="chain" id="PRO_0000358879" description="Arginine-hydroxylase NDUFAF5, mitochondrial">
    <location>
        <begin position="30"/>
        <end position="343"/>
    </location>
</feature>
<feature type="region of interest" description="Disordered" evidence="3">
    <location>
        <begin position="18"/>
        <end position="40"/>
    </location>
</feature>
<organism>
    <name type="scientific">Rattus norvegicus</name>
    <name type="common">Rat</name>
    <dbReference type="NCBI Taxonomy" id="10116"/>
    <lineage>
        <taxon>Eukaryota</taxon>
        <taxon>Metazoa</taxon>
        <taxon>Chordata</taxon>
        <taxon>Craniata</taxon>
        <taxon>Vertebrata</taxon>
        <taxon>Euteleostomi</taxon>
        <taxon>Mammalia</taxon>
        <taxon>Eutheria</taxon>
        <taxon>Euarchontoglires</taxon>
        <taxon>Glires</taxon>
        <taxon>Rodentia</taxon>
        <taxon>Myomorpha</taxon>
        <taxon>Muroidea</taxon>
        <taxon>Muridae</taxon>
        <taxon>Murinae</taxon>
        <taxon>Rattus</taxon>
    </lineage>
</organism>
<dbReference type="EC" id="1.-.-.-" evidence="1"/>
<dbReference type="EC" id="2.1.1.-" evidence="4"/>
<dbReference type="EMBL" id="BC166551">
    <property type="protein sequence ID" value="AAI66551.1"/>
    <property type="molecule type" value="mRNA"/>
</dbReference>
<dbReference type="RefSeq" id="NP_001119843.1">
    <property type="nucleotide sequence ID" value="NM_001126371.1"/>
</dbReference>
<dbReference type="SMR" id="B2GV71"/>
<dbReference type="FunCoup" id="B2GV71">
    <property type="interactions" value="917"/>
</dbReference>
<dbReference type="STRING" id="10116.ENSRNOP00000006412"/>
<dbReference type="iPTMnet" id="B2GV71"/>
<dbReference type="PhosphoSitePlus" id="B2GV71"/>
<dbReference type="PaxDb" id="10116-ENSRNOP00000006412"/>
<dbReference type="PeptideAtlas" id="B2GV71"/>
<dbReference type="Ensembl" id="ENSRNOT00000006412.7">
    <property type="protein sequence ID" value="ENSRNOP00000006412.4"/>
    <property type="gene ID" value="ENSRNOG00000004784.7"/>
</dbReference>
<dbReference type="GeneID" id="296190"/>
<dbReference type="KEGG" id="rno:296190"/>
<dbReference type="UCSC" id="RGD:1309829">
    <property type="organism name" value="rat"/>
</dbReference>
<dbReference type="AGR" id="RGD:1309829"/>
<dbReference type="CTD" id="79133"/>
<dbReference type="RGD" id="1309829">
    <property type="gene designation" value="Ndufaf5"/>
</dbReference>
<dbReference type="eggNOG" id="KOG2940">
    <property type="taxonomic scope" value="Eukaryota"/>
</dbReference>
<dbReference type="GeneTree" id="ENSGT00390000014687"/>
<dbReference type="HOGENOM" id="CLU_046586_0_2_1"/>
<dbReference type="InParanoid" id="B2GV71"/>
<dbReference type="OMA" id="YEVVYGH"/>
<dbReference type="OrthoDB" id="16816at2759"/>
<dbReference type="PhylomeDB" id="B2GV71"/>
<dbReference type="TreeFam" id="TF315222"/>
<dbReference type="Reactome" id="R-RNO-6799198">
    <property type="pathway name" value="Complex I biogenesis"/>
</dbReference>
<dbReference type="PRO" id="PR:B2GV71"/>
<dbReference type="Proteomes" id="UP000002494">
    <property type="component" value="Chromosome 3"/>
</dbReference>
<dbReference type="Bgee" id="ENSRNOG00000004784">
    <property type="expression patterns" value="Expressed in quadriceps femoris and 20 other cell types or tissues"/>
</dbReference>
<dbReference type="GO" id="GO:0099617">
    <property type="term" value="C:matrix side of mitochondrial inner membrane"/>
    <property type="evidence" value="ECO:0000266"/>
    <property type="project" value="RGD"/>
</dbReference>
<dbReference type="GO" id="GO:0005739">
    <property type="term" value="C:mitochondrion"/>
    <property type="evidence" value="ECO:0000250"/>
    <property type="project" value="UniProtKB"/>
</dbReference>
<dbReference type="GO" id="GO:0004497">
    <property type="term" value="F:monooxygenase activity"/>
    <property type="evidence" value="ECO:0000250"/>
    <property type="project" value="UniProtKB"/>
</dbReference>
<dbReference type="GO" id="GO:0008757">
    <property type="term" value="F:S-adenosylmethionine-dependent methyltransferase activity"/>
    <property type="evidence" value="ECO:0007669"/>
    <property type="project" value="InterPro"/>
</dbReference>
<dbReference type="GO" id="GO:0032259">
    <property type="term" value="P:methylation"/>
    <property type="evidence" value="ECO:0007669"/>
    <property type="project" value="UniProtKB-KW"/>
</dbReference>
<dbReference type="GO" id="GO:0032981">
    <property type="term" value="P:mitochondrial respiratory chain complex I assembly"/>
    <property type="evidence" value="ECO:0000250"/>
    <property type="project" value="UniProtKB"/>
</dbReference>
<dbReference type="CDD" id="cd02440">
    <property type="entry name" value="AdoMet_MTases"/>
    <property type="match status" value="1"/>
</dbReference>
<dbReference type="FunFam" id="3.40.50.150:FF:000199">
    <property type="entry name" value="arginine-hydroxylase NDUFAF5, mitochondrial isoform X1"/>
    <property type="match status" value="1"/>
</dbReference>
<dbReference type="Gene3D" id="3.40.50.150">
    <property type="entry name" value="Vaccinia Virus protein VP39"/>
    <property type="match status" value="1"/>
</dbReference>
<dbReference type="InterPro" id="IPR050602">
    <property type="entry name" value="Malonyl-ACP_OMT"/>
</dbReference>
<dbReference type="InterPro" id="IPR013216">
    <property type="entry name" value="Methyltransf_11"/>
</dbReference>
<dbReference type="InterPro" id="IPR029063">
    <property type="entry name" value="SAM-dependent_MTases_sf"/>
</dbReference>
<dbReference type="PANTHER" id="PTHR13090">
    <property type="entry name" value="ARGININE-HYDROXYLASE NDUFAF5, MITOCHONDRIAL"/>
    <property type="match status" value="1"/>
</dbReference>
<dbReference type="PANTHER" id="PTHR13090:SF1">
    <property type="entry name" value="ARGININE-HYDROXYLASE NDUFAF5, MITOCHONDRIAL"/>
    <property type="match status" value="1"/>
</dbReference>
<dbReference type="Pfam" id="PF08241">
    <property type="entry name" value="Methyltransf_11"/>
    <property type="match status" value="1"/>
</dbReference>
<dbReference type="SUPFAM" id="SSF53335">
    <property type="entry name" value="S-adenosyl-L-methionine-dependent methyltransferases"/>
    <property type="match status" value="1"/>
</dbReference>
<comment type="function">
    <text evidence="1">Arginine hydroxylase that mediates hydroxylation of 'Arg-111' of NDUFS7 and is involved in the assembly of mitochondrial NADH:ubiquinone oxidoreductase complex (complex I, MT-ND1) at early stages. May also have methyltransferase activity.</text>
</comment>
<comment type="subunit">
    <text evidence="1">Interacts with NDUFAF8, leading to stabilize NDUFAF5. Interacts with NDUFS7. Interacts with PYURF (via TRM112 domain); the interaction is direct and stabilizes NDUFAF5 protein (By similarity).</text>
</comment>
<comment type="subcellular location">
    <subcellularLocation>
        <location evidence="1">Mitochondrion inner membrane</location>
    </subcellularLocation>
    <text evidence="1">Peripherally localized on the matrix face of the mitochondrial inner membrane.</text>
</comment>
<comment type="similarity">
    <text evidence="4">Belongs to the methyltransferase superfamily.</text>
</comment>
<accession>B2GV71</accession>
<sequence length="343" mass="38229">MLRRVVLSRLYARLGGPAVSAGRGGRRGVASSVPPSGSTSPRALNIFDRELKRKQKNWAARQPEPMKFDYLKEEIGSRIADRVYDIARDFPLALDIGCGRGYIAQHLNKETVGKIFQTDIAEHALKNSIETDIPTVNILADEEFLPFPENTFDLVVSSLSLHWVNDLPRALEQIHYVLKPDGVFVGAMFGGDTLYELRCSLQLAETEREGGFSPHISPFTAVNDLGHLLGRAGFNTLTVDTDEIQVNYPGMFELMEDLKGMGESNCSWNRKALLHRDTMLAAAAVYREMYSNEDGSIPATYQIYHMIGWKYHDSQARPAERGSATVSFGDLARLNDTMSQGKK</sequence>
<proteinExistence type="evidence at transcript level"/>
<keyword id="KW-0472">Membrane</keyword>
<keyword id="KW-0489">Methyltransferase</keyword>
<keyword id="KW-0496">Mitochondrion</keyword>
<keyword id="KW-0999">Mitochondrion inner membrane</keyword>
<keyword id="KW-0560">Oxidoreductase</keyword>
<keyword id="KW-1185">Reference proteome</keyword>
<keyword id="KW-0808">Transferase</keyword>
<keyword id="KW-0809">Transit peptide</keyword>
<reference key="1">
    <citation type="journal article" date="2004" name="Genome Res.">
        <title>The status, quality, and expansion of the NIH full-length cDNA project: the Mammalian Gene Collection (MGC).</title>
        <authorList>
            <consortium name="The MGC Project Team"/>
        </authorList>
    </citation>
    <scope>NUCLEOTIDE SEQUENCE [LARGE SCALE MRNA]</scope>
    <source>
        <tissue>Ovary</tissue>
    </source>
</reference>
<gene>
    <name evidence="5" type="primary">Ndufaf5</name>
</gene>
<name>NDUF5_RAT</name>
<protein>
    <recommendedName>
        <fullName>Arginine-hydroxylase NDUFAF5, mitochondrial</fullName>
        <ecNumber evidence="1">1.-.-.-</ecNumber>
    </recommendedName>
    <alternativeName>
        <fullName evidence="5">NADH dehydrogenase [ubiquinone] 1 alpha subcomplex assembly factor 5</fullName>
    </alternativeName>
    <alternativeName>
        <fullName evidence="4">Putative methyltransferase NDUFAF5</fullName>
        <ecNumber evidence="4">2.1.1.-</ecNumber>
    </alternativeName>
</protein>